<keyword id="KW-0007">Acetylation</keyword>
<keyword id="KW-0963">Cytoplasm</keyword>
<keyword id="KW-1185">Reference proteome</keyword>
<accession>Q7ZYA6</accession>
<name>CDV3A_XENLA</name>
<organism>
    <name type="scientific">Xenopus laevis</name>
    <name type="common">African clawed frog</name>
    <dbReference type="NCBI Taxonomy" id="8355"/>
    <lineage>
        <taxon>Eukaryota</taxon>
        <taxon>Metazoa</taxon>
        <taxon>Chordata</taxon>
        <taxon>Craniata</taxon>
        <taxon>Vertebrata</taxon>
        <taxon>Euteleostomi</taxon>
        <taxon>Amphibia</taxon>
        <taxon>Batrachia</taxon>
        <taxon>Anura</taxon>
        <taxon>Pipoidea</taxon>
        <taxon>Pipidae</taxon>
        <taxon>Xenopodinae</taxon>
        <taxon>Xenopus</taxon>
        <taxon>Xenopus</taxon>
    </lineage>
</organism>
<protein>
    <recommendedName>
        <fullName>Protein CDV3 homolog A</fullName>
    </recommendedName>
</protein>
<reference key="1">
    <citation type="submission" date="2003-01" db="EMBL/GenBank/DDBJ databases">
        <authorList>
            <consortium name="NIH - Xenopus Gene Collection (XGC) project"/>
        </authorList>
    </citation>
    <scope>NUCLEOTIDE SEQUENCE [LARGE SCALE MRNA]</scope>
    <source>
        <tissue>Embryo</tissue>
    </source>
</reference>
<comment type="subcellular location">
    <subcellularLocation>
        <location evidence="1">Cytoplasm</location>
    </subcellularLocation>
</comment>
<comment type="similarity">
    <text evidence="3">Belongs to the CDV3 family.</text>
</comment>
<dbReference type="EMBL" id="BC043870">
    <property type="protein sequence ID" value="AAH43870.1"/>
    <property type="molecule type" value="mRNA"/>
</dbReference>
<dbReference type="RefSeq" id="NP_001080515.1">
    <property type="nucleotide sequence ID" value="NM_001087046.1"/>
</dbReference>
<dbReference type="BioGRID" id="98449">
    <property type="interactions" value="1"/>
</dbReference>
<dbReference type="IntAct" id="Q7ZYA6">
    <property type="interactions" value="1"/>
</dbReference>
<dbReference type="DNASU" id="380207"/>
<dbReference type="GeneID" id="380207"/>
<dbReference type="KEGG" id="xla:380207"/>
<dbReference type="AGR" id="Xenbase:XB-GENE-17330875"/>
<dbReference type="CTD" id="380207"/>
<dbReference type="Xenbase" id="XB-GENE-17330875">
    <property type="gene designation" value="cdv3.S"/>
</dbReference>
<dbReference type="OrthoDB" id="6288097at2759"/>
<dbReference type="Proteomes" id="UP000186698">
    <property type="component" value="Chromosome 6S"/>
</dbReference>
<dbReference type="Bgee" id="380207">
    <property type="expression patterns" value="Expressed in blastula and 19 other cell types or tissues"/>
</dbReference>
<dbReference type="GO" id="GO:0005737">
    <property type="term" value="C:cytoplasm"/>
    <property type="evidence" value="ECO:0000318"/>
    <property type="project" value="GO_Central"/>
</dbReference>
<dbReference type="InterPro" id="IPR026806">
    <property type="entry name" value="CDV3"/>
</dbReference>
<dbReference type="PANTHER" id="PTHR16284">
    <property type="entry name" value="PROTEIN CDV3 HOMOLOG"/>
    <property type="match status" value="1"/>
</dbReference>
<dbReference type="PANTHER" id="PTHR16284:SF13">
    <property type="entry name" value="PROTEIN CDV3 HOMOLOG"/>
    <property type="match status" value="1"/>
</dbReference>
<dbReference type="Pfam" id="PF15359">
    <property type="entry name" value="CDV3"/>
    <property type="match status" value="1"/>
</dbReference>
<sequence>MAEPQEKSLDDFFAKRDKKKKKDKGVSGSAAGSRGSARPPDGAPSSSSSMSGAGKGVKKEKSGKSDNPDQLQEKEDDEWKEFEQKEVDYSGLRIQSLQLSNEKEDDENEKKEEQGADWEETGGYGTDKSSGPWNKTSQAQAPISAVTEAPEPVHTGGVYRPPAARASVSTRKPQGPPEIYSDTQFPSLQATAKHTESRREKEMEKTFEMVKHKNRARDEATKNQALRLQLDNQYAVLGEQ</sequence>
<proteinExistence type="evidence at transcript level"/>
<evidence type="ECO:0000250" key="1"/>
<evidence type="ECO:0000256" key="2">
    <source>
        <dbReference type="SAM" id="MobiDB-lite"/>
    </source>
</evidence>
<evidence type="ECO:0000305" key="3"/>
<gene>
    <name type="primary">cdv3-a</name>
</gene>
<feature type="initiator methionine" description="Removed" evidence="1">
    <location>
        <position position="1"/>
    </location>
</feature>
<feature type="chain" id="PRO_0000299565" description="Protein CDV3 homolog A">
    <location>
        <begin position="2"/>
        <end position="240"/>
    </location>
</feature>
<feature type="region of interest" description="Disordered" evidence="2">
    <location>
        <begin position="1"/>
        <end position="204"/>
    </location>
</feature>
<feature type="compositionally biased region" description="Basic and acidic residues" evidence="2">
    <location>
        <begin position="1"/>
        <end position="15"/>
    </location>
</feature>
<feature type="compositionally biased region" description="Low complexity" evidence="2">
    <location>
        <begin position="27"/>
        <end position="52"/>
    </location>
</feature>
<feature type="compositionally biased region" description="Basic and acidic residues" evidence="2">
    <location>
        <begin position="57"/>
        <end position="73"/>
    </location>
</feature>
<feature type="compositionally biased region" description="Polar residues" evidence="2">
    <location>
        <begin position="127"/>
        <end position="141"/>
    </location>
</feature>
<feature type="compositionally biased region" description="Polar residues" evidence="2">
    <location>
        <begin position="181"/>
        <end position="192"/>
    </location>
</feature>
<feature type="compositionally biased region" description="Basic and acidic residues" evidence="2">
    <location>
        <begin position="193"/>
        <end position="204"/>
    </location>
</feature>
<feature type="modified residue" description="N-acetylalanine" evidence="1">
    <location>
        <position position="2"/>
    </location>
</feature>